<comment type="function">
    <text evidence="1">ATP-binding RNA helicase involved in the biogenesis of 60S ribosomal subunits and is required for the normal formation of 25S and 5.8S rRNAs.</text>
</comment>
<comment type="catalytic activity">
    <reaction>
        <text>ATP + H2O = ADP + phosphate + H(+)</text>
        <dbReference type="Rhea" id="RHEA:13065"/>
        <dbReference type="ChEBI" id="CHEBI:15377"/>
        <dbReference type="ChEBI" id="CHEBI:15378"/>
        <dbReference type="ChEBI" id="CHEBI:30616"/>
        <dbReference type="ChEBI" id="CHEBI:43474"/>
        <dbReference type="ChEBI" id="CHEBI:456216"/>
        <dbReference type="EC" id="3.6.4.13"/>
    </reaction>
</comment>
<comment type="subcellular location">
    <subcellularLocation>
        <location evidence="1">Nucleus</location>
        <location evidence="1">Nucleolus</location>
    </subcellularLocation>
</comment>
<comment type="domain">
    <text>The Q motif is unique to and characteristic of the DEAD box family of RNA helicases and controls ATP binding and hydrolysis.</text>
</comment>
<comment type="similarity">
    <text evidence="5">Belongs to the DEAD box helicase family. DDX54/DBP10 subfamily.</text>
</comment>
<gene>
    <name type="primary">DBP10</name>
    <name type="ordered locus">AEL086W</name>
</gene>
<organism>
    <name type="scientific">Eremothecium gossypii (strain ATCC 10895 / CBS 109.51 / FGSC 9923 / NRRL Y-1056)</name>
    <name type="common">Yeast</name>
    <name type="synonym">Ashbya gossypii</name>
    <dbReference type="NCBI Taxonomy" id="284811"/>
    <lineage>
        <taxon>Eukaryota</taxon>
        <taxon>Fungi</taxon>
        <taxon>Dikarya</taxon>
        <taxon>Ascomycota</taxon>
        <taxon>Saccharomycotina</taxon>
        <taxon>Saccharomycetes</taxon>
        <taxon>Saccharomycetales</taxon>
        <taxon>Saccharomycetaceae</taxon>
        <taxon>Eremothecium</taxon>
    </lineage>
</organism>
<feature type="chain" id="PRO_0000227952" description="ATP-dependent RNA helicase DBP10">
    <location>
        <begin position="1"/>
        <end position="960"/>
    </location>
</feature>
<feature type="domain" description="Helicase ATP-binding" evidence="2">
    <location>
        <begin position="151"/>
        <end position="323"/>
    </location>
</feature>
<feature type="domain" description="Helicase C-terminal" evidence="3">
    <location>
        <begin position="388"/>
        <end position="546"/>
    </location>
</feature>
<feature type="region of interest" description="Disordered" evidence="4">
    <location>
        <begin position="1"/>
        <end position="102"/>
    </location>
</feature>
<feature type="region of interest" description="Disordered" evidence="4">
    <location>
        <begin position="370"/>
        <end position="409"/>
    </location>
</feature>
<feature type="region of interest" description="Disordered" evidence="4">
    <location>
        <begin position="872"/>
        <end position="903"/>
    </location>
</feature>
<feature type="region of interest" description="Disordered" evidence="4">
    <location>
        <begin position="920"/>
        <end position="960"/>
    </location>
</feature>
<feature type="short sequence motif" description="Q motif">
    <location>
        <begin position="120"/>
        <end position="148"/>
    </location>
</feature>
<feature type="short sequence motif" description="DEAD box">
    <location>
        <begin position="271"/>
        <end position="274"/>
    </location>
</feature>
<feature type="compositionally biased region" description="Acidic residues" evidence="4">
    <location>
        <begin position="13"/>
        <end position="22"/>
    </location>
</feature>
<feature type="compositionally biased region" description="Acidic residues" evidence="4">
    <location>
        <begin position="30"/>
        <end position="53"/>
    </location>
</feature>
<feature type="compositionally biased region" description="Low complexity" evidence="4">
    <location>
        <begin position="64"/>
        <end position="76"/>
    </location>
</feature>
<feature type="compositionally biased region" description="Acidic residues" evidence="4">
    <location>
        <begin position="89"/>
        <end position="102"/>
    </location>
</feature>
<feature type="compositionally biased region" description="Basic and acidic residues" evidence="4">
    <location>
        <begin position="893"/>
        <end position="902"/>
    </location>
</feature>
<feature type="compositionally biased region" description="Basic and acidic residues" evidence="4">
    <location>
        <begin position="929"/>
        <end position="946"/>
    </location>
</feature>
<feature type="compositionally biased region" description="Basic residues" evidence="4">
    <location>
        <begin position="947"/>
        <end position="960"/>
    </location>
</feature>
<feature type="binding site" evidence="2">
    <location>
        <begin position="164"/>
        <end position="171"/>
    </location>
    <ligand>
        <name>ATP</name>
        <dbReference type="ChEBI" id="CHEBI:30616"/>
    </ligand>
</feature>
<accession>Q757U8</accession>
<protein>
    <recommendedName>
        <fullName>ATP-dependent RNA helicase DBP10</fullName>
        <ecNumber>3.6.4.13</ecNumber>
    </recommendedName>
</protein>
<reference key="1">
    <citation type="journal article" date="2004" name="Science">
        <title>The Ashbya gossypii genome as a tool for mapping the ancient Saccharomyces cerevisiae genome.</title>
        <authorList>
            <person name="Dietrich F.S."/>
            <person name="Voegeli S."/>
            <person name="Brachat S."/>
            <person name="Lerch A."/>
            <person name="Gates K."/>
            <person name="Steiner S."/>
            <person name="Mohr C."/>
            <person name="Poehlmann R."/>
            <person name="Luedi P."/>
            <person name="Choi S."/>
            <person name="Wing R.A."/>
            <person name="Flavier A."/>
            <person name="Gaffney T.D."/>
            <person name="Philippsen P."/>
        </authorList>
    </citation>
    <scope>NUCLEOTIDE SEQUENCE [LARGE SCALE GENOMIC DNA]</scope>
    <source>
        <strain>ATCC 10895 / CBS 109.51 / FGSC 9923 / NRRL Y-1056</strain>
    </source>
</reference>
<reference key="2">
    <citation type="journal article" date="2013" name="G3 (Bethesda)">
        <title>Genomes of Ashbya fungi isolated from insects reveal four mating-type loci, numerous translocations, lack of transposons, and distinct gene duplications.</title>
        <authorList>
            <person name="Dietrich F.S."/>
            <person name="Voegeli S."/>
            <person name="Kuo S."/>
            <person name="Philippsen P."/>
        </authorList>
    </citation>
    <scope>GENOME REANNOTATION</scope>
    <source>
        <strain>ATCC 10895 / CBS 109.51 / FGSC 9923 / NRRL Y-1056</strain>
    </source>
</reference>
<evidence type="ECO:0000250" key="1"/>
<evidence type="ECO:0000255" key="2">
    <source>
        <dbReference type="PROSITE-ProRule" id="PRU00541"/>
    </source>
</evidence>
<evidence type="ECO:0000255" key="3">
    <source>
        <dbReference type="PROSITE-ProRule" id="PRU00542"/>
    </source>
</evidence>
<evidence type="ECO:0000256" key="4">
    <source>
        <dbReference type="SAM" id="MobiDB-lite"/>
    </source>
</evidence>
<evidence type="ECO:0000305" key="5"/>
<proteinExistence type="inferred from homology"/>
<keyword id="KW-0067">ATP-binding</keyword>
<keyword id="KW-0347">Helicase</keyword>
<keyword id="KW-0378">Hydrolase</keyword>
<keyword id="KW-0547">Nucleotide-binding</keyword>
<keyword id="KW-0539">Nucleus</keyword>
<keyword id="KW-1185">Reference proteome</keyword>
<keyword id="KW-0690">Ribosome biogenesis</keyword>
<keyword id="KW-0694">RNA-binding</keyword>
<keyword id="KW-0698">rRNA processing</keyword>
<name>DBP10_EREGS</name>
<dbReference type="EC" id="3.6.4.13"/>
<dbReference type="EMBL" id="AE016818">
    <property type="protein sequence ID" value="AAS52599.1"/>
    <property type="molecule type" value="Genomic_DNA"/>
</dbReference>
<dbReference type="RefSeq" id="NP_984775.1">
    <property type="nucleotide sequence ID" value="NM_210129.1"/>
</dbReference>
<dbReference type="SMR" id="Q757U8"/>
<dbReference type="FunCoup" id="Q757U8">
    <property type="interactions" value="1159"/>
</dbReference>
<dbReference type="STRING" id="284811.Q757U8"/>
<dbReference type="EnsemblFungi" id="AAS52599">
    <property type="protein sequence ID" value="AAS52599"/>
    <property type="gene ID" value="AGOS_AEL086W"/>
</dbReference>
<dbReference type="GeneID" id="4620965"/>
<dbReference type="KEGG" id="ago:AGOS_AEL086W"/>
<dbReference type="eggNOG" id="KOG0337">
    <property type="taxonomic scope" value="Eukaryota"/>
</dbReference>
<dbReference type="HOGENOM" id="CLU_003041_5_2_1"/>
<dbReference type="InParanoid" id="Q757U8"/>
<dbReference type="OMA" id="EDQFGMM"/>
<dbReference type="OrthoDB" id="10261375at2759"/>
<dbReference type="Proteomes" id="UP000000591">
    <property type="component" value="Chromosome V"/>
</dbReference>
<dbReference type="GO" id="GO:0005730">
    <property type="term" value="C:nucleolus"/>
    <property type="evidence" value="ECO:0000318"/>
    <property type="project" value="GO_Central"/>
</dbReference>
<dbReference type="GO" id="GO:0030687">
    <property type="term" value="C:preribosome, large subunit precursor"/>
    <property type="evidence" value="ECO:0007669"/>
    <property type="project" value="EnsemblFungi"/>
</dbReference>
<dbReference type="GO" id="GO:0005524">
    <property type="term" value="F:ATP binding"/>
    <property type="evidence" value="ECO:0007669"/>
    <property type="project" value="UniProtKB-KW"/>
</dbReference>
<dbReference type="GO" id="GO:0016887">
    <property type="term" value="F:ATP hydrolysis activity"/>
    <property type="evidence" value="ECO:0007669"/>
    <property type="project" value="RHEA"/>
</dbReference>
<dbReference type="GO" id="GO:0042802">
    <property type="term" value="F:identical protein binding"/>
    <property type="evidence" value="ECO:0007669"/>
    <property type="project" value="EnsemblFungi"/>
</dbReference>
<dbReference type="GO" id="GO:0003723">
    <property type="term" value="F:RNA binding"/>
    <property type="evidence" value="ECO:0007669"/>
    <property type="project" value="UniProtKB-KW"/>
</dbReference>
<dbReference type="GO" id="GO:0003724">
    <property type="term" value="F:RNA helicase activity"/>
    <property type="evidence" value="ECO:0007669"/>
    <property type="project" value="UniProtKB-EC"/>
</dbReference>
<dbReference type="GO" id="GO:1902626">
    <property type="term" value="P:assembly of large subunit precursor of preribosome"/>
    <property type="evidence" value="ECO:0007669"/>
    <property type="project" value="EnsemblFungi"/>
</dbReference>
<dbReference type="GO" id="GO:0000466">
    <property type="term" value="P:maturation of 5.8S rRNA from tricistronic rRNA transcript (SSU-rRNA, 5.8S rRNA, LSU-rRNA)"/>
    <property type="evidence" value="ECO:0007669"/>
    <property type="project" value="EnsemblFungi"/>
</dbReference>
<dbReference type="GO" id="GO:0000463">
    <property type="term" value="P:maturation of LSU-rRNA from tricistronic rRNA transcript (SSU-rRNA, 5.8S rRNA, LSU-rRNA)"/>
    <property type="evidence" value="ECO:0007669"/>
    <property type="project" value="EnsemblFungi"/>
</dbReference>
<dbReference type="GO" id="GO:0006364">
    <property type="term" value="P:rRNA processing"/>
    <property type="evidence" value="ECO:0000318"/>
    <property type="project" value="GO_Central"/>
</dbReference>
<dbReference type="CDD" id="cd17959">
    <property type="entry name" value="DEADc_DDX54"/>
    <property type="match status" value="1"/>
</dbReference>
<dbReference type="CDD" id="cd18787">
    <property type="entry name" value="SF2_C_DEAD"/>
    <property type="match status" value="1"/>
</dbReference>
<dbReference type="FunFam" id="3.40.50.300:FF:000865">
    <property type="entry name" value="ATP-dependent RNA helicase DDX54"/>
    <property type="match status" value="1"/>
</dbReference>
<dbReference type="Gene3D" id="3.40.50.300">
    <property type="entry name" value="P-loop containing nucleotide triphosphate hydrolases"/>
    <property type="match status" value="2"/>
</dbReference>
<dbReference type="InterPro" id="IPR012541">
    <property type="entry name" value="DBP10_C"/>
</dbReference>
<dbReference type="InterPro" id="IPR033517">
    <property type="entry name" value="DDX54/DBP10_DEAD-box_helicase"/>
</dbReference>
<dbReference type="InterPro" id="IPR011545">
    <property type="entry name" value="DEAD/DEAH_box_helicase_dom"/>
</dbReference>
<dbReference type="InterPro" id="IPR050079">
    <property type="entry name" value="DEAD_box_RNA_helicase"/>
</dbReference>
<dbReference type="InterPro" id="IPR014001">
    <property type="entry name" value="Helicase_ATP-bd"/>
</dbReference>
<dbReference type="InterPro" id="IPR001650">
    <property type="entry name" value="Helicase_C-like"/>
</dbReference>
<dbReference type="InterPro" id="IPR027417">
    <property type="entry name" value="P-loop_NTPase"/>
</dbReference>
<dbReference type="InterPro" id="IPR000629">
    <property type="entry name" value="RNA-helicase_DEAD-box_CS"/>
</dbReference>
<dbReference type="InterPro" id="IPR014014">
    <property type="entry name" value="RNA_helicase_DEAD_Q_motif"/>
</dbReference>
<dbReference type="PANTHER" id="PTHR47959">
    <property type="entry name" value="ATP-DEPENDENT RNA HELICASE RHLE-RELATED"/>
    <property type="match status" value="1"/>
</dbReference>
<dbReference type="PANTHER" id="PTHR47959:SF8">
    <property type="entry name" value="RNA HELICASE"/>
    <property type="match status" value="1"/>
</dbReference>
<dbReference type="Pfam" id="PF08147">
    <property type="entry name" value="DBP10CT"/>
    <property type="match status" value="1"/>
</dbReference>
<dbReference type="Pfam" id="PF00270">
    <property type="entry name" value="DEAD"/>
    <property type="match status" value="1"/>
</dbReference>
<dbReference type="Pfam" id="PF00271">
    <property type="entry name" value="Helicase_C"/>
    <property type="match status" value="1"/>
</dbReference>
<dbReference type="SMART" id="SM01123">
    <property type="entry name" value="DBP10CT"/>
    <property type="match status" value="1"/>
</dbReference>
<dbReference type="SMART" id="SM00487">
    <property type="entry name" value="DEXDc"/>
    <property type="match status" value="1"/>
</dbReference>
<dbReference type="SMART" id="SM00490">
    <property type="entry name" value="HELICc"/>
    <property type="match status" value="1"/>
</dbReference>
<dbReference type="SUPFAM" id="SSF52540">
    <property type="entry name" value="P-loop containing nucleoside triphosphate hydrolases"/>
    <property type="match status" value="2"/>
</dbReference>
<dbReference type="PROSITE" id="PS00039">
    <property type="entry name" value="DEAD_ATP_HELICASE"/>
    <property type="match status" value="1"/>
</dbReference>
<dbReference type="PROSITE" id="PS51192">
    <property type="entry name" value="HELICASE_ATP_BIND_1"/>
    <property type="match status" value="1"/>
</dbReference>
<dbReference type="PROSITE" id="PS51194">
    <property type="entry name" value="HELICASE_CTER"/>
    <property type="match status" value="1"/>
</dbReference>
<dbReference type="PROSITE" id="PS51195">
    <property type="entry name" value="Q_MOTIF"/>
    <property type="match status" value="1"/>
</dbReference>
<sequence>MGLASKRKRDTEEHSDEGEDFDIAGNIALDSEDSDDSVSDSDNEVQDIIEFSDDEKQNAPQVSKTAKGAKGAKVAAPRSDAAFPSLELSDGEDADNGDKDDVDSYFNTTSQLAASKAKKGSFASFGLSKFILGNISRKGFRQPTPIQRKTIPLILQQRDIVGMARTGSGKTAAFVLPLIEKLKMHSAKIGARAMILSPSRELAMQTHKVFKEFAKGSNLRSVLLTGGDGLEDQFSMMMSNPDVIIATPGRFLHLKVEMNLDLHSIEYVVFDEADRLFEMGFQEQLNELLGSLPTARQTLLFSATLPSSLVDFAKAGLTNPVLVRLDTETKVSENLEMLFLSVKNDEREANLLYLLQEVIKIPVATEEQLQRFRKQSNDDADDSDDETDKKKKHSKKSKQPLPSAKDMPSPNSTIIFVSTRHHVEYVSNLLKDCGYLVSYLYGTLDQHARRQQLHNFRCGLTNILVVTDVAARGVDIPLLANVVNMSLPASSKIFVHRVGRTARAGNKGWAYTILSESELPYLLDLELFLGKKVLLTPMYEATCDLLKKKWISEGNEGALFQPPKISYVNRLILGSAPRLDLEAMGDLFKNLVESNFELQNLKAVSIKAEKLYLRTRQPASAESIKRAKEVIAAGWDEQNVRFGKNIEKEKLEFLAKLQNRHNKETVFEFARNHDDEMAILMKRRRRQIAPIQQRAKERQQLLEKERQAGLRHTLEDEILKGEENEVGYSVPQELLRDFEDADELAAKRNTKKGFRDENFYLSHFAPASDIQDKQLQVASSFTNEVSKATFDLHNDDKVQVHKQTATVKWDKKRKKYVNVQGIDNKKYIIGESGQKIPASFRSGKFDEWSKARKLAPLKVGARESSIPANLLADPTGSRLANGKFKHKQIKAPKMPDKNRDDYQSQLKKVNKAMESGLHVKGYNAPGMKQELRTTEQIRKQRSMAEKRKAKNARPAKKRKF</sequence>